<comment type="function">
    <text evidence="1">Catalyzes the thiamine diphosphate-dependent decarboxylation of 2-oxoglutarate and the subsequent addition of the resulting succinic semialdehyde-thiamine pyrophosphate anion to isochorismate to yield 2-succinyl-5-enolpyruvyl-6-hydroxy-3-cyclohexene-1-carboxylate (SEPHCHC).</text>
</comment>
<comment type="catalytic activity">
    <reaction evidence="1">
        <text>isochorismate + 2-oxoglutarate + H(+) = 5-enolpyruvoyl-6-hydroxy-2-succinyl-cyclohex-3-ene-1-carboxylate + CO2</text>
        <dbReference type="Rhea" id="RHEA:25593"/>
        <dbReference type="ChEBI" id="CHEBI:15378"/>
        <dbReference type="ChEBI" id="CHEBI:16526"/>
        <dbReference type="ChEBI" id="CHEBI:16810"/>
        <dbReference type="ChEBI" id="CHEBI:29780"/>
        <dbReference type="ChEBI" id="CHEBI:58818"/>
        <dbReference type="EC" id="2.2.1.9"/>
    </reaction>
</comment>
<comment type="cofactor">
    <cofactor evidence="1">
        <name>Mg(2+)</name>
        <dbReference type="ChEBI" id="CHEBI:18420"/>
    </cofactor>
    <cofactor evidence="1">
        <name>Mn(2+)</name>
        <dbReference type="ChEBI" id="CHEBI:29035"/>
    </cofactor>
</comment>
<comment type="cofactor">
    <cofactor evidence="1">
        <name>thiamine diphosphate</name>
        <dbReference type="ChEBI" id="CHEBI:58937"/>
    </cofactor>
    <text evidence="1">Binds 1 thiamine pyrophosphate per subunit.</text>
</comment>
<comment type="pathway">
    <text evidence="1">Quinol/quinone metabolism; 1,4-dihydroxy-2-naphthoate biosynthesis; 1,4-dihydroxy-2-naphthoate from chorismate: step 2/7.</text>
</comment>
<comment type="pathway">
    <text evidence="1">Quinol/quinone metabolism; menaquinone biosynthesis.</text>
</comment>
<comment type="subunit">
    <text evidence="1">Homodimer.</text>
</comment>
<comment type="similarity">
    <text evidence="1">Belongs to the TPP enzyme family. MenD subfamily.</text>
</comment>
<gene>
    <name evidence="1" type="primary">menD</name>
    <name type="ordered locus">SH1919</name>
</gene>
<protein>
    <recommendedName>
        <fullName evidence="1">2-succinyl-5-enolpyruvyl-6-hydroxy-3-cyclohexene-1-carboxylate synthase</fullName>
        <shortName evidence="1">SEPHCHC synthase</shortName>
        <ecNumber evidence="1">2.2.1.9</ecNumber>
    </recommendedName>
    <alternativeName>
        <fullName evidence="1">Menaquinone biosynthesis protein MenD</fullName>
    </alternativeName>
</protein>
<proteinExistence type="inferred from homology"/>
<keyword id="KW-0460">Magnesium</keyword>
<keyword id="KW-0464">Manganese</keyword>
<keyword id="KW-0474">Menaquinone biosynthesis</keyword>
<keyword id="KW-0479">Metal-binding</keyword>
<keyword id="KW-0786">Thiamine pyrophosphate</keyword>
<keyword id="KW-0808">Transferase</keyword>
<name>MEND_STAHJ</name>
<organism>
    <name type="scientific">Staphylococcus haemolyticus (strain JCSC1435)</name>
    <dbReference type="NCBI Taxonomy" id="279808"/>
    <lineage>
        <taxon>Bacteria</taxon>
        <taxon>Bacillati</taxon>
        <taxon>Bacillota</taxon>
        <taxon>Bacilli</taxon>
        <taxon>Bacillales</taxon>
        <taxon>Staphylococcaceae</taxon>
        <taxon>Staphylococcus</taxon>
    </lineage>
</organism>
<dbReference type="EC" id="2.2.1.9" evidence="1"/>
<dbReference type="EMBL" id="AP006716">
    <property type="protein sequence ID" value="BAE05228.1"/>
    <property type="molecule type" value="Genomic_DNA"/>
</dbReference>
<dbReference type="RefSeq" id="WP_011276189.1">
    <property type="nucleotide sequence ID" value="NC_007168.1"/>
</dbReference>
<dbReference type="SMR" id="Q4L547"/>
<dbReference type="KEGG" id="sha:SH1919"/>
<dbReference type="eggNOG" id="COG1165">
    <property type="taxonomic scope" value="Bacteria"/>
</dbReference>
<dbReference type="HOGENOM" id="CLU_006051_3_0_9"/>
<dbReference type="OrthoDB" id="9791859at2"/>
<dbReference type="UniPathway" id="UPA00079"/>
<dbReference type="UniPathway" id="UPA01057">
    <property type="reaction ID" value="UER00164"/>
</dbReference>
<dbReference type="Proteomes" id="UP000000543">
    <property type="component" value="Chromosome"/>
</dbReference>
<dbReference type="GO" id="GO:0070204">
    <property type="term" value="F:2-succinyl-5-enolpyruvyl-6-hydroxy-3-cyclohexene-1-carboxylic-acid synthase activity"/>
    <property type="evidence" value="ECO:0007669"/>
    <property type="project" value="UniProtKB-UniRule"/>
</dbReference>
<dbReference type="GO" id="GO:0000287">
    <property type="term" value="F:magnesium ion binding"/>
    <property type="evidence" value="ECO:0007669"/>
    <property type="project" value="UniProtKB-UniRule"/>
</dbReference>
<dbReference type="GO" id="GO:0030145">
    <property type="term" value="F:manganese ion binding"/>
    <property type="evidence" value="ECO:0007669"/>
    <property type="project" value="UniProtKB-UniRule"/>
</dbReference>
<dbReference type="GO" id="GO:0030976">
    <property type="term" value="F:thiamine pyrophosphate binding"/>
    <property type="evidence" value="ECO:0007669"/>
    <property type="project" value="UniProtKB-UniRule"/>
</dbReference>
<dbReference type="GO" id="GO:0009234">
    <property type="term" value="P:menaquinone biosynthetic process"/>
    <property type="evidence" value="ECO:0007669"/>
    <property type="project" value="UniProtKB-UniRule"/>
</dbReference>
<dbReference type="CDD" id="cd07037">
    <property type="entry name" value="TPP_PYR_MenD"/>
    <property type="match status" value="1"/>
</dbReference>
<dbReference type="CDD" id="cd02009">
    <property type="entry name" value="TPP_SHCHC_synthase"/>
    <property type="match status" value="1"/>
</dbReference>
<dbReference type="Gene3D" id="3.40.50.970">
    <property type="match status" value="2"/>
</dbReference>
<dbReference type="Gene3D" id="3.40.50.1220">
    <property type="entry name" value="TPP-binding domain"/>
    <property type="match status" value="1"/>
</dbReference>
<dbReference type="HAMAP" id="MF_01659">
    <property type="entry name" value="MenD"/>
    <property type="match status" value="1"/>
</dbReference>
<dbReference type="InterPro" id="IPR029035">
    <property type="entry name" value="DHS-like_NAD/FAD-binding_dom"/>
</dbReference>
<dbReference type="InterPro" id="IPR004433">
    <property type="entry name" value="MenaQ_synth_MenD"/>
</dbReference>
<dbReference type="InterPro" id="IPR032264">
    <property type="entry name" value="MenD_middle"/>
</dbReference>
<dbReference type="InterPro" id="IPR029061">
    <property type="entry name" value="THDP-binding"/>
</dbReference>
<dbReference type="InterPro" id="IPR012001">
    <property type="entry name" value="Thiamin_PyroP_enz_TPP-bd_dom"/>
</dbReference>
<dbReference type="InterPro" id="IPR011766">
    <property type="entry name" value="TPP_enzyme_TPP-bd"/>
</dbReference>
<dbReference type="NCBIfam" id="TIGR00173">
    <property type="entry name" value="menD"/>
    <property type="match status" value="1"/>
</dbReference>
<dbReference type="PANTHER" id="PTHR42916">
    <property type="entry name" value="2-SUCCINYL-5-ENOLPYRUVYL-6-HYDROXY-3-CYCLOHEXENE-1-CARBOXYLATE SYNTHASE"/>
    <property type="match status" value="1"/>
</dbReference>
<dbReference type="PANTHER" id="PTHR42916:SF1">
    <property type="entry name" value="PROTEIN PHYLLO, CHLOROPLASTIC"/>
    <property type="match status" value="1"/>
</dbReference>
<dbReference type="Pfam" id="PF02775">
    <property type="entry name" value="TPP_enzyme_C"/>
    <property type="match status" value="1"/>
</dbReference>
<dbReference type="Pfam" id="PF16582">
    <property type="entry name" value="TPP_enzyme_M_2"/>
    <property type="match status" value="1"/>
</dbReference>
<dbReference type="Pfam" id="PF02776">
    <property type="entry name" value="TPP_enzyme_N"/>
    <property type="match status" value="1"/>
</dbReference>
<dbReference type="PIRSF" id="PIRSF004983">
    <property type="entry name" value="MenD"/>
    <property type="match status" value="1"/>
</dbReference>
<dbReference type="SUPFAM" id="SSF52467">
    <property type="entry name" value="DHS-like NAD/FAD-binding domain"/>
    <property type="match status" value="1"/>
</dbReference>
<dbReference type="SUPFAM" id="SSF52518">
    <property type="entry name" value="Thiamin diphosphate-binding fold (THDP-binding)"/>
    <property type="match status" value="2"/>
</dbReference>
<feature type="chain" id="PRO_0000341865" description="2-succinyl-5-enolpyruvyl-6-hydroxy-3-cyclohexene-1-carboxylate synthase">
    <location>
        <begin position="1"/>
        <end position="556"/>
    </location>
</feature>
<reference key="1">
    <citation type="journal article" date="2005" name="J. Bacteriol.">
        <title>Whole-genome sequencing of Staphylococcus haemolyticus uncovers the extreme plasticity of its genome and the evolution of human-colonizing staphylococcal species.</title>
        <authorList>
            <person name="Takeuchi F."/>
            <person name="Watanabe S."/>
            <person name="Baba T."/>
            <person name="Yuzawa H."/>
            <person name="Ito T."/>
            <person name="Morimoto Y."/>
            <person name="Kuroda M."/>
            <person name="Cui L."/>
            <person name="Takahashi M."/>
            <person name="Ankai A."/>
            <person name="Baba S."/>
            <person name="Fukui S."/>
            <person name="Lee J.C."/>
            <person name="Hiramatsu K."/>
        </authorList>
    </citation>
    <scope>NUCLEOTIDE SEQUENCE [LARGE SCALE GENOMIC DNA]</scope>
    <source>
        <strain>JCSC1435</strain>
    </source>
</reference>
<evidence type="ECO:0000255" key="1">
    <source>
        <dbReference type="HAMAP-Rule" id="MF_01659"/>
    </source>
</evidence>
<sequence length="556" mass="63095">MNHNEALTKQVYTFASELYAYGVREVVISPGSRSTPLAIAFEAHPNIKTWIHPDERSAAFFALGLIKGSERPVAILCTSGTAAANYTPAIAESQISRIPLIVLTSDRPHELRSVGAPQAINQVNMFANYVNFQFDMPVADGTDYMLDAIYYQMQIASQYLYGPHRGPIHFNLPFREPLTPNLERQEWLTSYSKKLPHYQKNINVQDIRHILKEKKGLIIVGDMQHQAIDQILTYATVHDIPILADPLSQLRKYNHPNVITTYDLYYRAGLDIDVDFVIRVGKPVISKKLNQWLKRTNAYQILVQNNDKIDVFPTPPSISYEISANDFFRNLIEEAAVDRKDWINMWRTLESQARNTIDKHMTNATDEAAFVKILIDKLTKDDAIFVSNSMPVRDIDNLLYNSEVEVYANRGANGIDGVVSTAIGMAVHKKITLIIGDLAFYHDMNGLLMAKINNINLNIVLLNNDGGGIFSYLPQKASAEAYFERLFGTPTGLNFEYTALLYDFTFKRFNTVADFTQEKLSHVNSHIYEMVTNRDDNMSQHQILYKKLSGILNVTL</sequence>
<accession>Q4L547</accession>